<name>WECF_SHIBS</name>
<gene>
    <name evidence="1" type="primary">wecF</name>
    <name evidence="1" type="synonym">rffT</name>
    <name type="ordered locus">SBO_3804</name>
</gene>
<keyword id="KW-0997">Cell inner membrane</keyword>
<keyword id="KW-1003">Cell membrane</keyword>
<keyword id="KW-0328">Glycosyltransferase</keyword>
<keyword id="KW-0472">Membrane</keyword>
<keyword id="KW-0808">Transferase</keyword>
<comment type="function">
    <text evidence="1">Catalyzes the synthesis of Und-PP-GlcNAc-ManNAcA-Fuc4NAc (Lipid III), the third lipid-linked intermediate involved in ECA synthesis.</text>
</comment>
<comment type="catalytic activity">
    <reaction evidence="1">
        <text>beta-D-ManNAcA-(1-&gt;4)-alpha-D-GlcNAc-di-trans,octa-cis-undecaprenyl diphosphate + dTDP-4-acetamido-4,6-dideoxy-alpha-D-galactose = alpha-D-FucNAc4-(1-&gt;4)-beta-D-ManNAcA-(1-&gt;4)-D-GlcNAc-undecaprenyl diphosphate + dTDP + H(+)</text>
        <dbReference type="Rhea" id="RHEA:28759"/>
        <dbReference type="ChEBI" id="CHEBI:15378"/>
        <dbReference type="ChEBI" id="CHEBI:58369"/>
        <dbReference type="ChEBI" id="CHEBI:61495"/>
        <dbReference type="ChEBI" id="CHEBI:61496"/>
        <dbReference type="ChEBI" id="CHEBI:68493"/>
        <dbReference type="EC" id="2.4.1.325"/>
    </reaction>
</comment>
<comment type="pathway">
    <text evidence="1">Bacterial outer membrane biogenesis; enterobacterial common antigen biosynthesis.</text>
</comment>
<comment type="subcellular location">
    <subcellularLocation>
        <location evidence="1">Cell inner membrane</location>
        <topology evidence="1">Peripheral membrane protein</topology>
    </subcellularLocation>
</comment>
<comment type="similarity">
    <text evidence="1">Belongs to the glycosyltransferase 56 family.</text>
</comment>
<feature type="chain" id="PRO_1000062746" description="TDP-N-acetylfucosamine:lipid II N-acetylfucosaminyltransferase">
    <location>
        <begin position="1"/>
        <end position="359"/>
    </location>
</feature>
<organism>
    <name type="scientific">Shigella boydii serotype 4 (strain Sb227)</name>
    <dbReference type="NCBI Taxonomy" id="300268"/>
    <lineage>
        <taxon>Bacteria</taxon>
        <taxon>Pseudomonadati</taxon>
        <taxon>Pseudomonadota</taxon>
        <taxon>Gammaproteobacteria</taxon>
        <taxon>Enterobacterales</taxon>
        <taxon>Enterobacteriaceae</taxon>
        <taxon>Shigella</taxon>
    </lineage>
</organism>
<protein>
    <recommendedName>
        <fullName evidence="1">TDP-N-acetylfucosamine:lipid II N-acetylfucosaminyltransferase</fullName>
        <ecNumber evidence="1">2.4.1.325</ecNumber>
    </recommendedName>
    <alternativeName>
        <fullName evidence="1">4-alpha-L-fucosyltransferase</fullName>
    </alternativeName>
    <alternativeName>
        <fullName evidence="1">TDP-Fuc4NAc:lipid II Fuc4NAc transferase</fullName>
        <shortName evidence="1">Fuc4NAc transferase</shortName>
    </alternativeName>
</protein>
<dbReference type="EC" id="2.4.1.325" evidence="1"/>
<dbReference type="EMBL" id="CP000036">
    <property type="protein sequence ID" value="ABB68267.1"/>
    <property type="molecule type" value="Genomic_DNA"/>
</dbReference>
<dbReference type="RefSeq" id="WP_000217242.1">
    <property type="nucleotide sequence ID" value="NC_007613.1"/>
</dbReference>
<dbReference type="SMR" id="Q31UJ1"/>
<dbReference type="CAZy" id="GT56">
    <property type="family name" value="Glycosyltransferase Family 56"/>
</dbReference>
<dbReference type="KEGG" id="sbo:SBO_3804"/>
<dbReference type="HOGENOM" id="CLU_066584_0_0_6"/>
<dbReference type="UniPathway" id="UPA00566"/>
<dbReference type="Proteomes" id="UP000007067">
    <property type="component" value="Chromosome"/>
</dbReference>
<dbReference type="GO" id="GO:0005886">
    <property type="term" value="C:plasma membrane"/>
    <property type="evidence" value="ECO:0007669"/>
    <property type="project" value="UniProtKB-SubCell"/>
</dbReference>
<dbReference type="GO" id="GO:0102031">
    <property type="term" value="F:4-acetamido-4,6-dideoxy-D-galactose transferase activity"/>
    <property type="evidence" value="ECO:0007669"/>
    <property type="project" value="UniProtKB-EC"/>
</dbReference>
<dbReference type="GO" id="GO:0008417">
    <property type="term" value="F:fucosyltransferase activity"/>
    <property type="evidence" value="ECO:0007669"/>
    <property type="project" value="InterPro"/>
</dbReference>
<dbReference type="GO" id="GO:0009246">
    <property type="term" value="P:enterobacterial common antigen biosynthetic process"/>
    <property type="evidence" value="ECO:0007669"/>
    <property type="project" value="UniProtKB-UniRule"/>
</dbReference>
<dbReference type="GO" id="GO:0036065">
    <property type="term" value="P:fucosylation"/>
    <property type="evidence" value="ECO:0007669"/>
    <property type="project" value="InterPro"/>
</dbReference>
<dbReference type="HAMAP" id="MF_01002">
    <property type="entry name" value="WecF_RffT"/>
    <property type="match status" value="1"/>
</dbReference>
<dbReference type="InterPro" id="IPR009993">
    <property type="entry name" value="WecF"/>
</dbReference>
<dbReference type="NCBIfam" id="NF002752">
    <property type="entry name" value="PRK02797.1-1"/>
    <property type="match status" value="1"/>
</dbReference>
<dbReference type="NCBIfam" id="NF002753">
    <property type="entry name" value="PRK02797.1-2"/>
    <property type="match status" value="1"/>
</dbReference>
<dbReference type="NCBIfam" id="NF002754">
    <property type="entry name" value="PRK02797.1-3"/>
    <property type="match status" value="1"/>
</dbReference>
<dbReference type="Pfam" id="PF07429">
    <property type="entry name" value="Glyco_transf_56"/>
    <property type="match status" value="1"/>
</dbReference>
<reference key="1">
    <citation type="journal article" date="2005" name="Nucleic Acids Res.">
        <title>Genome dynamics and diversity of Shigella species, the etiologic agents of bacillary dysentery.</title>
        <authorList>
            <person name="Yang F."/>
            <person name="Yang J."/>
            <person name="Zhang X."/>
            <person name="Chen L."/>
            <person name="Jiang Y."/>
            <person name="Yan Y."/>
            <person name="Tang X."/>
            <person name="Wang J."/>
            <person name="Xiong Z."/>
            <person name="Dong J."/>
            <person name="Xue Y."/>
            <person name="Zhu Y."/>
            <person name="Xu X."/>
            <person name="Sun L."/>
            <person name="Chen S."/>
            <person name="Nie H."/>
            <person name="Peng J."/>
            <person name="Xu J."/>
            <person name="Wang Y."/>
            <person name="Yuan Z."/>
            <person name="Wen Y."/>
            <person name="Yao Z."/>
            <person name="Shen Y."/>
            <person name="Qiang B."/>
            <person name="Hou Y."/>
            <person name="Yu J."/>
            <person name="Jin Q."/>
        </authorList>
    </citation>
    <scope>NUCLEOTIDE SEQUENCE [LARGE SCALE GENOMIC DNA]</scope>
    <source>
        <strain>Sb227</strain>
    </source>
</reference>
<sequence length="359" mass="40570">MTVLIHVLGSDIPHHNRTVLRFFNDALAATSEHAREFMVVGKDDGLSDSCPALSVQFFPGKKSLAEAVIAKAKANRQQRFFFHGQFNPTLWLALLSGGIKPSQFFWHIWGADLYELSSGLRYKLFYPLRRLAQKRVGCVFATRGDLSFFAKTHPKVRGELLYFPTRMDPSLNTMANDRQREGKMTILVGNSGDRSNDHIAALRAVHQQFGDTVKVVVPMGYPPNNEAYIEEVRQAGLELFSEENLQILSEKLEFDAYLALLRQCDLGYFIFARQQGIGTLCLLIQAGIPCVLNRENPFWQDMTEQHLPVLFTTDDLNEDIVREAQRQLASVDKNTIAFFSPNYLQGWQRVLAIAAGEVA</sequence>
<accession>Q31UJ1</accession>
<evidence type="ECO:0000255" key="1">
    <source>
        <dbReference type="HAMAP-Rule" id="MF_01002"/>
    </source>
</evidence>
<proteinExistence type="inferred from homology"/>